<dbReference type="EC" id="2.1.1.182" evidence="1"/>
<dbReference type="EMBL" id="CP000489">
    <property type="protein sequence ID" value="ABL69008.1"/>
    <property type="molecule type" value="Genomic_DNA"/>
</dbReference>
<dbReference type="RefSeq" id="WP_011747236.1">
    <property type="nucleotide sequence ID" value="NC_008686.1"/>
</dbReference>
<dbReference type="SMR" id="A1B0G4"/>
<dbReference type="STRING" id="318586.Pden_0897"/>
<dbReference type="EnsemblBacteria" id="ABL69008">
    <property type="protein sequence ID" value="ABL69008"/>
    <property type="gene ID" value="Pden_0897"/>
</dbReference>
<dbReference type="GeneID" id="93452119"/>
<dbReference type="KEGG" id="pde:Pden_0897"/>
<dbReference type="eggNOG" id="COG0030">
    <property type="taxonomic scope" value="Bacteria"/>
</dbReference>
<dbReference type="HOGENOM" id="CLU_041220_0_1_5"/>
<dbReference type="OrthoDB" id="9814755at2"/>
<dbReference type="Proteomes" id="UP000000361">
    <property type="component" value="Chromosome 1"/>
</dbReference>
<dbReference type="GO" id="GO:0005829">
    <property type="term" value="C:cytosol"/>
    <property type="evidence" value="ECO:0007669"/>
    <property type="project" value="TreeGrafter"/>
</dbReference>
<dbReference type="GO" id="GO:0052908">
    <property type="term" value="F:16S rRNA (adenine(1518)-N(6)/adenine(1519)-N(6))-dimethyltransferase activity"/>
    <property type="evidence" value="ECO:0007669"/>
    <property type="project" value="UniProtKB-EC"/>
</dbReference>
<dbReference type="GO" id="GO:0003723">
    <property type="term" value="F:RNA binding"/>
    <property type="evidence" value="ECO:0007669"/>
    <property type="project" value="UniProtKB-KW"/>
</dbReference>
<dbReference type="CDD" id="cd02440">
    <property type="entry name" value="AdoMet_MTases"/>
    <property type="match status" value="1"/>
</dbReference>
<dbReference type="FunFam" id="1.10.8.100:FF:000001">
    <property type="entry name" value="Ribosomal RNA small subunit methyltransferase A"/>
    <property type="match status" value="1"/>
</dbReference>
<dbReference type="Gene3D" id="1.10.8.100">
    <property type="entry name" value="Ribosomal RNA adenine dimethylase-like, domain 2"/>
    <property type="match status" value="1"/>
</dbReference>
<dbReference type="Gene3D" id="3.40.50.150">
    <property type="entry name" value="Vaccinia Virus protein VP39"/>
    <property type="match status" value="1"/>
</dbReference>
<dbReference type="HAMAP" id="MF_00607">
    <property type="entry name" value="16SrRNA_methyltr_A"/>
    <property type="match status" value="1"/>
</dbReference>
<dbReference type="InterPro" id="IPR001737">
    <property type="entry name" value="KsgA/Erm"/>
</dbReference>
<dbReference type="InterPro" id="IPR023165">
    <property type="entry name" value="rRNA_Ade_diMease-like_C"/>
</dbReference>
<dbReference type="InterPro" id="IPR020596">
    <property type="entry name" value="rRNA_Ade_Mease_Trfase_CS"/>
</dbReference>
<dbReference type="InterPro" id="IPR020598">
    <property type="entry name" value="rRNA_Ade_methylase_Trfase_N"/>
</dbReference>
<dbReference type="InterPro" id="IPR011530">
    <property type="entry name" value="rRNA_adenine_dimethylase"/>
</dbReference>
<dbReference type="InterPro" id="IPR029063">
    <property type="entry name" value="SAM-dependent_MTases_sf"/>
</dbReference>
<dbReference type="NCBIfam" id="TIGR00755">
    <property type="entry name" value="ksgA"/>
    <property type="match status" value="1"/>
</dbReference>
<dbReference type="PANTHER" id="PTHR11727">
    <property type="entry name" value="DIMETHYLADENOSINE TRANSFERASE"/>
    <property type="match status" value="1"/>
</dbReference>
<dbReference type="PANTHER" id="PTHR11727:SF7">
    <property type="entry name" value="DIMETHYLADENOSINE TRANSFERASE-RELATED"/>
    <property type="match status" value="1"/>
</dbReference>
<dbReference type="Pfam" id="PF00398">
    <property type="entry name" value="RrnaAD"/>
    <property type="match status" value="1"/>
</dbReference>
<dbReference type="SMART" id="SM00650">
    <property type="entry name" value="rADc"/>
    <property type="match status" value="1"/>
</dbReference>
<dbReference type="SUPFAM" id="SSF53335">
    <property type="entry name" value="S-adenosyl-L-methionine-dependent methyltransferases"/>
    <property type="match status" value="1"/>
</dbReference>
<dbReference type="PROSITE" id="PS01131">
    <property type="entry name" value="RRNA_A_DIMETH"/>
    <property type="match status" value="1"/>
</dbReference>
<dbReference type="PROSITE" id="PS51689">
    <property type="entry name" value="SAM_RNA_A_N6_MT"/>
    <property type="match status" value="1"/>
</dbReference>
<comment type="function">
    <text evidence="1">Specifically dimethylates two adjacent adenosines (A1518 and A1519) in the loop of a conserved hairpin near the 3'-end of 16S rRNA in the 30S particle. May play a critical role in biogenesis of 30S subunits.</text>
</comment>
<comment type="catalytic activity">
    <reaction evidence="1">
        <text>adenosine(1518)/adenosine(1519) in 16S rRNA + 4 S-adenosyl-L-methionine = N(6)-dimethyladenosine(1518)/N(6)-dimethyladenosine(1519) in 16S rRNA + 4 S-adenosyl-L-homocysteine + 4 H(+)</text>
        <dbReference type="Rhea" id="RHEA:19609"/>
        <dbReference type="Rhea" id="RHEA-COMP:10232"/>
        <dbReference type="Rhea" id="RHEA-COMP:10233"/>
        <dbReference type="ChEBI" id="CHEBI:15378"/>
        <dbReference type="ChEBI" id="CHEBI:57856"/>
        <dbReference type="ChEBI" id="CHEBI:59789"/>
        <dbReference type="ChEBI" id="CHEBI:74411"/>
        <dbReference type="ChEBI" id="CHEBI:74493"/>
        <dbReference type="EC" id="2.1.1.182"/>
    </reaction>
</comment>
<comment type="subcellular location">
    <subcellularLocation>
        <location evidence="1">Cytoplasm</location>
    </subcellularLocation>
</comment>
<comment type="similarity">
    <text evidence="1">Belongs to the class I-like SAM-binding methyltransferase superfamily. rRNA adenine N(6)-methyltransferase family. RsmA subfamily.</text>
</comment>
<proteinExistence type="inferred from homology"/>
<reference key="1">
    <citation type="submission" date="2006-12" db="EMBL/GenBank/DDBJ databases">
        <title>Complete sequence of chromosome 1 of Paracoccus denitrificans PD1222.</title>
        <authorList>
            <person name="Copeland A."/>
            <person name="Lucas S."/>
            <person name="Lapidus A."/>
            <person name="Barry K."/>
            <person name="Detter J.C."/>
            <person name="Glavina del Rio T."/>
            <person name="Hammon N."/>
            <person name="Israni S."/>
            <person name="Dalin E."/>
            <person name="Tice H."/>
            <person name="Pitluck S."/>
            <person name="Munk A.C."/>
            <person name="Brettin T."/>
            <person name="Bruce D."/>
            <person name="Han C."/>
            <person name="Tapia R."/>
            <person name="Gilna P."/>
            <person name="Schmutz J."/>
            <person name="Larimer F."/>
            <person name="Land M."/>
            <person name="Hauser L."/>
            <person name="Kyrpides N."/>
            <person name="Lykidis A."/>
            <person name="Spiro S."/>
            <person name="Richardson D.J."/>
            <person name="Moir J.W.B."/>
            <person name="Ferguson S.J."/>
            <person name="van Spanning R.J.M."/>
            <person name="Richardson P."/>
        </authorList>
    </citation>
    <scope>NUCLEOTIDE SEQUENCE [LARGE SCALE GENOMIC DNA]</scope>
    <source>
        <strain>Pd 1222</strain>
    </source>
</reference>
<keyword id="KW-0963">Cytoplasm</keyword>
<keyword id="KW-0489">Methyltransferase</keyword>
<keyword id="KW-1185">Reference proteome</keyword>
<keyword id="KW-0694">RNA-binding</keyword>
<keyword id="KW-0698">rRNA processing</keyword>
<keyword id="KW-0949">S-adenosyl-L-methionine</keyword>
<keyword id="KW-0808">Transferase</keyword>
<feature type="chain" id="PRO_1000056647" description="Ribosomal RNA small subunit methyltransferase A">
    <location>
        <begin position="1"/>
        <end position="282"/>
    </location>
</feature>
<feature type="binding site" evidence="1">
    <location>
        <position position="28"/>
    </location>
    <ligand>
        <name>S-adenosyl-L-methionine</name>
        <dbReference type="ChEBI" id="CHEBI:59789"/>
    </ligand>
</feature>
<feature type="binding site" evidence="1">
    <location>
        <position position="30"/>
    </location>
    <ligand>
        <name>S-adenosyl-L-methionine</name>
        <dbReference type="ChEBI" id="CHEBI:59789"/>
    </ligand>
</feature>
<feature type="binding site" evidence="1">
    <location>
        <position position="55"/>
    </location>
    <ligand>
        <name>S-adenosyl-L-methionine</name>
        <dbReference type="ChEBI" id="CHEBI:59789"/>
    </ligand>
</feature>
<feature type="binding site" evidence="1">
    <location>
        <position position="77"/>
    </location>
    <ligand>
        <name>S-adenosyl-L-methionine</name>
        <dbReference type="ChEBI" id="CHEBI:59789"/>
    </ligand>
</feature>
<feature type="binding site" evidence="1">
    <location>
        <position position="103"/>
    </location>
    <ligand>
        <name>S-adenosyl-L-methionine</name>
        <dbReference type="ChEBI" id="CHEBI:59789"/>
    </ligand>
</feature>
<feature type="binding site" evidence="1">
    <location>
        <position position="122"/>
    </location>
    <ligand>
        <name>S-adenosyl-L-methionine</name>
        <dbReference type="ChEBI" id="CHEBI:59789"/>
    </ligand>
</feature>
<organism>
    <name type="scientific">Paracoccus denitrificans (strain Pd 1222)</name>
    <dbReference type="NCBI Taxonomy" id="318586"/>
    <lineage>
        <taxon>Bacteria</taxon>
        <taxon>Pseudomonadati</taxon>
        <taxon>Pseudomonadota</taxon>
        <taxon>Alphaproteobacteria</taxon>
        <taxon>Rhodobacterales</taxon>
        <taxon>Paracoccaceae</taxon>
        <taxon>Paracoccus</taxon>
    </lineage>
</organism>
<name>RSMA_PARDP</name>
<accession>A1B0G4</accession>
<evidence type="ECO:0000255" key="1">
    <source>
        <dbReference type="HAMAP-Rule" id="MF_00607"/>
    </source>
</evidence>
<gene>
    <name evidence="1" type="primary">rsmA</name>
    <name evidence="1" type="synonym">ksgA</name>
    <name type="ordered locus">Pden_0897</name>
</gene>
<protein>
    <recommendedName>
        <fullName evidence="1">Ribosomal RNA small subunit methyltransferase A</fullName>
        <ecNumber evidence="1">2.1.1.182</ecNumber>
    </recommendedName>
    <alternativeName>
        <fullName evidence="1">16S rRNA (adenine(1518)-N(6)/adenine(1519)-N(6))-dimethyltransferase</fullName>
    </alternativeName>
    <alternativeName>
        <fullName evidence="1">16S rRNA dimethyladenosine transferase</fullName>
    </alternativeName>
    <alternativeName>
        <fullName evidence="1">16S rRNA dimethylase</fullName>
    </alternativeName>
    <alternativeName>
        <fullName evidence="1">S-adenosylmethionine-6-N', N'-adenosyl(rRNA) dimethyltransferase</fullName>
    </alternativeName>
</protein>
<sequence>MSAIDGLPPLREVIARHDLRAKKQLGQNFLLDLNLTAKIARAAGDLTGCDVIEVGPGPGGLTRGLLAEGARHVLAIEKDARALPALAEIATAYPGRLEVIHGDALEIDPLAHLTPPIRIVANLPYNVGTELLIRWLTPAAWPPFWQSLTLMFQKEVAERIVAQPGGKAYGRLAVLAQWRTEARIVMTLPPEAFVPAPKVHSAVVHLTALPGPRYPADPAVLNRVVAAGFNQRRKMLRASLKGLHPEIEALLIQAGIAPTARAEEIGLEQFCALARGLAAAPR</sequence>